<evidence type="ECO:0000250" key="1"/>
<evidence type="ECO:0000255" key="2"/>
<evidence type="ECO:0000269" key="3">
    <source>
    </source>
</evidence>
<evidence type="ECO:0000269" key="4">
    <source>
    </source>
</evidence>
<evidence type="ECO:0000269" key="5">
    <source>
    </source>
</evidence>
<evidence type="ECO:0000269" key="6">
    <source>
    </source>
</evidence>
<evidence type="ECO:0000269" key="7">
    <source>
    </source>
</evidence>
<evidence type="ECO:0000269" key="8">
    <source ref="1"/>
</evidence>
<evidence type="ECO:0000303" key="9">
    <source>
    </source>
</evidence>
<evidence type="ECO:0000303" key="10">
    <source>
    </source>
</evidence>
<evidence type="ECO:0000305" key="11"/>
<evidence type="ECO:0000312" key="12">
    <source>
        <dbReference type="HGNC" id="HGNC:2953"/>
    </source>
</evidence>
<organism>
    <name type="scientific">Homo sapiens</name>
    <name type="common">Human</name>
    <dbReference type="NCBI Taxonomy" id="9606"/>
    <lineage>
        <taxon>Eukaryota</taxon>
        <taxon>Metazoa</taxon>
        <taxon>Chordata</taxon>
        <taxon>Craniata</taxon>
        <taxon>Vertebrata</taxon>
        <taxon>Euteleostomi</taxon>
        <taxon>Mammalia</taxon>
        <taxon>Eutheria</taxon>
        <taxon>Euarchontoglires</taxon>
        <taxon>Primates</taxon>
        <taxon>Haplorrhini</taxon>
        <taxon>Catarrhini</taxon>
        <taxon>Hominidae</taxon>
        <taxon>Homo</taxon>
    </lineage>
</organism>
<keyword id="KW-0002">3D-structure</keyword>
<keyword id="KW-0025">Alternative splicing</keyword>
<keyword id="KW-0067">ATP-binding</keyword>
<keyword id="KW-0966">Cell projection</keyword>
<keyword id="KW-1186">Ciliopathy</keyword>
<keyword id="KW-0969">Cilium</keyword>
<keyword id="KW-0970">Cilium biogenesis/degradation</keyword>
<keyword id="KW-0175">Coiled coil</keyword>
<keyword id="KW-0963">Cytoplasm</keyword>
<keyword id="KW-0206">Cytoskeleton</keyword>
<keyword id="KW-0225">Disease variant</keyword>
<keyword id="KW-0243">Dynein</keyword>
<keyword id="KW-1012">Kartagener syndrome</keyword>
<keyword id="KW-0493">Microtubule</keyword>
<keyword id="KW-0505">Motor protein</keyword>
<keyword id="KW-0547">Nucleotide-binding</keyword>
<keyword id="KW-0990">Primary ciliary dyskinesia</keyword>
<keyword id="KW-1267">Proteomics identification</keyword>
<keyword id="KW-1185">Reference proteome</keyword>
<keyword id="KW-0677">Repeat</keyword>
<protein>
    <recommendedName>
        <fullName evidence="11">Dynein axonemal heavy chain 9</fullName>
    </recommendedName>
    <alternativeName>
        <fullName>Axonemal beta dynein heavy chain 9</fullName>
    </alternativeName>
    <alternativeName>
        <fullName>Ciliary dynein heavy chain 9</fullName>
    </alternativeName>
</protein>
<feature type="chain" id="PRO_0000114632" description="Dynein axonemal heavy chain 9">
    <location>
        <begin position="1"/>
        <end position="4486"/>
    </location>
</feature>
<feature type="region of interest" description="Stem" evidence="1">
    <location>
        <begin position="1"/>
        <end position="1831"/>
    </location>
</feature>
<feature type="region of interest" description="AAA 1" evidence="1">
    <location>
        <begin position="1832"/>
        <end position="2053"/>
    </location>
</feature>
<feature type="region of interest" description="AAA 2" evidence="1">
    <location>
        <begin position="2113"/>
        <end position="2334"/>
    </location>
</feature>
<feature type="region of interest" description="AAA 3" evidence="1">
    <location>
        <begin position="2440"/>
        <end position="2688"/>
    </location>
</feature>
<feature type="region of interest" description="AAA 4" evidence="1">
    <location>
        <begin position="2787"/>
        <end position="3036"/>
    </location>
</feature>
<feature type="region of interest" description="Stalk" evidence="1">
    <location>
        <begin position="3051"/>
        <end position="3341"/>
    </location>
</feature>
<feature type="region of interest" description="AAA 5" evidence="1">
    <location>
        <begin position="3429"/>
        <end position="3656"/>
    </location>
</feature>
<feature type="region of interest" description="AAA 6" evidence="1">
    <location>
        <begin position="3866"/>
        <end position="4092"/>
    </location>
</feature>
<feature type="coiled-coil region" evidence="2">
    <location>
        <begin position="381"/>
        <end position="410"/>
    </location>
</feature>
<feature type="coiled-coil region" evidence="2">
    <location>
        <begin position="504"/>
        <end position="529"/>
    </location>
</feature>
<feature type="coiled-coil region" evidence="2">
    <location>
        <begin position="639"/>
        <end position="662"/>
    </location>
</feature>
<feature type="coiled-coil region" evidence="2">
    <location>
        <begin position="752"/>
        <end position="823"/>
    </location>
</feature>
<feature type="coiled-coil region" evidence="2">
    <location>
        <begin position="1326"/>
        <end position="1355"/>
    </location>
</feature>
<feature type="coiled-coil region" evidence="2">
    <location>
        <begin position="3051"/>
        <end position="3154"/>
    </location>
</feature>
<feature type="coiled-coil region" evidence="2">
    <location>
        <begin position="3285"/>
        <end position="3341"/>
    </location>
</feature>
<feature type="coiled-coil region" evidence="2">
    <location>
        <begin position="3640"/>
        <end position="3675"/>
    </location>
</feature>
<feature type="binding site" evidence="2">
    <location>
        <begin position="1870"/>
        <end position="1877"/>
    </location>
    <ligand>
        <name>ATP</name>
        <dbReference type="ChEBI" id="CHEBI:30616"/>
    </ligand>
</feature>
<feature type="binding site" evidence="2">
    <location>
        <begin position="2151"/>
        <end position="2158"/>
    </location>
    <ligand>
        <name>ATP</name>
        <dbReference type="ChEBI" id="CHEBI:30616"/>
    </ligand>
</feature>
<feature type="binding site" evidence="2">
    <location>
        <begin position="2478"/>
        <end position="2485"/>
    </location>
    <ligand>
        <name>ATP</name>
        <dbReference type="ChEBI" id="CHEBI:30616"/>
    </ligand>
</feature>
<feature type="binding site" evidence="2">
    <location>
        <begin position="2825"/>
        <end position="2832"/>
    </location>
    <ligand>
        <name>ATP</name>
        <dbReference type="ChEBI" id="CHEBI:30616"/>
    </ligand>
</feature>
<feature type="splice variant" id="VSP_043443" description="In isoform 3." evidence="9">
    <location>
        <begin position="1"/>
        <end position="3688"/>
    </location>
</feature>
<feature type="splice variant" id="VSP_035285" description="In isoform 2." evidence="10">
    <location>
        <begin position="3961"/>
        <end position="4036"/>
    </location>
</feature>
<feature type="sequence variant" id="VAR_046312" description="In dbSNP:rs17599639.">
    <original>R</original>
    <variation>H</variation>
    <location>
        <position position="151"/>
    </location>
</feature>
<feature type="sequence variant" id="VAR_046313" description="In dbSNP:rs9892256." evidence="3 8">
    <original>Q</original>
    <variation>R</variation>
    <location>
        <position position="445"/>
    </location>
</feature>
<feature type="sequence variant" id="VAR_081802" description="In CILD40." evidence="6">
    <location>
        <begin position="666"/>
        <end position="4486"/>
    </location>
</feature>
<feature type="sequence variant" id="VAR_036214" description="In a breast cancer sample; somatic mutation." evidence="4">
    <original>R</original>
    <variation>L</variation>
    <location>
        <position position="771"/>
    </location>
</feature>
<feature type="sequence variant" id="VAR_046314" description="In dbSNP:rs16945138.">
    <original>R</original>
    <variation>W</variation>
    <location>
        <position position="842"/>
    </location>
</feature>
<feature type="sequence variant" id="VAR_046315" description="In dbSNP:rs8070501.">
    <original>R</original>
    <variation>W</variation>
    <location>
        <position position="1158"/>
    </location>
</feature>
<feature type="sequence variant" id="VAR_046316" description="In dbSNP:rs9916482.">
    <original>T</original>
    <variation>A</variation>
    <location>
        <position position="1221"/>
    </location>
</feature>
<feature type="sequence variant" id="VAR_081803" description="In CILD40; uncertain significance; dbSNP:rs140721719." evidence="6">
    <original>G</original>
    <variation>R</variation>
    <location>
        <position position="1674"/>
    </location>
</feature>
<feature type="sequence variant" id="VAR_081804" description="In CILD40; associated in cis with H-2965; no protein detected by Western blot when associated in cis with H-2965; loss of localization to cilium axonema when associated in cis with H-2965; dbSNP:rs1567747142." evidence="5">
    <original>K</original>
    <variation>E</variation>
    <location>
        <position position="1881"/>
    </location>
</feature>
<feature type="sequence variant" id="VAR_046317" description="In dbSNP:rs9892290.">
    <original>M</original>
    <variation>V</variation>
    <location>
        <position position="2087"/>
    </location>
</feature>
<feature type="sequence variant" id="VAR_046318" description="In dbSNP:rs3744581.">
    <original>N</original>
    <variation>S</variation>
    <location>
        <position position="2195"/>
    </location>
</feature>
<feature type="sequence variant" id="VAR_046319" description="In dbSNP:rs2277658.">
    <original>Q</original>
    <variation>H</variation>
    <location>
        <position position="2438"/>
    </location>
</feature>
<feature type="sequence variant" id="VAR_036215" description="In a breast cancer sample; somatic mutation." evidence="4">
    <original>D</original>
    <variation>H</variation>
    <location>
        <position position="2653"/>
    </location>
</feature>
<feature type="sequence variant" id="VAR_081805" description="In CILD40; loss of localization to cilium axonema." evidence="6">
    <location>
        <begin position="2751"/>
        <end position="4486"/>
    </location>
</feature>
<feature type="sequence variant" id="VAR_046320" description="In dbSNP:rs11870983.">
    <original>K</original>
    <variation>R</variation>
    <location>
        <position position="2961"/>
    </location>
</feature>
<feature type="sequence variant" id="VAR_081806" description="In CILD40; associated in cis with E-1881; no protein detected by Western blot when associated in cis with E-1881; loss of localization to cilium axonema when associated in cis with E-1881; dbSNP:rs375908701." evidence="5">
    <original>R</original>
    <variation>H</variation>
    <location>
        <position position="2965"/>
    </location>
</feature>
<feature type="sequence variant" id="VAR_046321" description="In dbSNP:rs11871037.">
    <original>K</original>
    <variation>N</variation>
    <location>
        <position position="2968"/>
    </location>
</feature>
<feature type="sequence variant" id="VAR_081807" description="In CILD40; dbSNP:rs763238622." evidence="5">
    <original>R</original>
    <variation>L</variation>
    <location>
        <position position="3398"/>
    </location>
</feature>
<feature type="sequence variant" id="VAR_036216" description="In a breast cancer sample; somatic mutation; dbSNP:rs138874996." evidence="4">
    <original>T</original>
    <variation>N</variation>
    <location>
        <position position="3664"/>
    </location>
</feature>
<feature type="sequence variant" id="VAR_046322" description="In dbSNP:rs16945431.">
    <original>R</original>
    <variation>Q</variation>
    <location>
        <position position="3726"/>
    </location>
</feature>
<feature type="sequence variant" id="VAR_046323" description="In dbSNP:rs3760436.">
    <original>R</original>
    <variation>W</variation>
    <location>
        <position position="3726"/>
    </location>
</feature>
<feature type="sequence variant" id="VAR_081808" description="In CILD40." evidence="6">
    <location>
        <begin position="3889"/>
        <end position="4486"/>
    </location>
</feature>
<feature type="sequence variant" id="VAR_046324" description="In dbSNP:rs17612861.">
    <original>D</original>
    <variation>N</variation>
    <location>
        <position position="4036"/>
    </location>
</feature>
<feature type="sequence variant" id="VAR_081809" description="In CILD40; loss of localization to cilium axonema; dbSNP:rs1267599270." evidence="5">
    <original>D</original>
    <variation>N</variation>
    <location>
        <position position="4123"/>
    </location>
</feature>
<feature type="sequence variant" id="VAR_046325" description="In dbSNP:rs1990236." evidence="8">
    <original>M</original>
    <variation>I</variation>
    <location>
        <position position="4374"/>
    </location>
</feature>
<feature type="sequence variant" id="VAR_046326" description="In dbSNP:rs9913494.">
    <original>R</original>
    <variation>C</variation>
    <location>
        <position position="4443"/>
    </location>
</feature>
<feature type="sequence variant" id="VAR_046327" description="In dbSNP:rs8074656.">
    <original>W</original>
    <variation>R</variation>
    <location>
        <position position="4462"/>
    </location>
</feature>
<feature type="sequence conflict" description="In Ref. 5; BAA21573." evidence="11" ref="5">
    <original>I</original>
    <variation>T</variation>
    <location>
        <position position="2216"/>
    </location>
</feature>
<feature type="sequence conflict" description="In Ref. 1; AAF69004." evidence="11" ref="1">
    <original>V</original>
    <variation>L</variation>
    <location>
        <position position="2505"/>
    </location>
</feature>
<feature type="sequence conflict" description="In Ref. 1; AAF69004." evidence="11" ref="1">
    <original>A</original>
    <variation>T</variation>
    <location>
        <position position="3678"/>
    </location>
</feature>
<name>DYH9_HUMAN</name>
<reference key="1">
    <citation type="submission" date="2000-04" db="EMBL/GenBank/DDBJ databases">
        <title>A ciliary dynein heavy chain whose expression is upregulated in differentiating airway epithelium.</title>
        <authorList>
            <person name="Reed W."/>
            <person name="Moats-Staats B.M."/>
            <person name="Carson J.L."/>
            <person name="Leigh M.W."/>
            <person name="Collier A.M."/>
        </authorList>
    </citation>
    <scope>NUCLEOTIDE SEQUENCE [MRNA] (ISOFORM 1)</scope>
    <scope>VARIANTS ARG-445 AND ILE-4374</scope>
</reference>
<reference key="2">
    <citation type="journal article" date="2001" name="Genomics">
        <title>Axonemal beta heavy chain dynein DNAH9: cDNA sequence, genomic structure, and investigation of its role in primary ciliary dyskinesia.</title>
        <authorList>
            <person name="Bartoloni L."/>
            <person name="Blouin J.-L."/>
            <person name="Maiti A.K."/>
            <person name="Sainsbury A."/>
            <person name="Rossier C."/>
            <person name="Gehrig C."/>
            <person name="She J.X."/>
            <person name="Marron M.P."/>
            <person name="Lander E.S."/>
            <person name="Meeks M."/>
            <person name="Chung E.M.K."/>
            <person name="Armengot M."/>
            <person name="Jorissen M."/>
            <person name="Scott H.S."/>
            <person name="Delozier-Blanchet C.D."/>
            <person name="Gardiner R.M."/>
            <person name="Antonarakis S.E."/>
        </authorList>
    </citation>
    <scope>NUCLEOTIDE SEQUENCE [MRNA] (ISOFORM 1)</scope>
    <scope>VARIANT ARG-445</scope>
    <source>
        <tissue>Nasal epithelium</tissue>
    </source>
</reference>
<reference key="3">
    <citation type="journal article" date="2006" name="Nature">
        <title>DNA sequence of human chromosome 17 and analysis of rearrangement in the human lineage.</title>
        <authorList>
            <person name="Zody M.C."/>
            <person name="Garber M."/>
            <person name="Adams D.J."/>
            <person name="Sharpe T."/>
            <person name="Harrow J."/>
            <person name="Lupski J.R."/>
            <person name="Nicholson C."/>
            <person name="Searle S.M."/>
            <person name="Wilming L."/>
            <person name="Young S.K."/>
            <person name="Abouelleil A."/>
            <person name="Allen N.R."/>
            <person name="Bi W."/>
            <person name="Bloom T."/>
            <person name="Borowsky M.L."/>
            <person name="Bugalter B.E."/>
            <person name="Butler J."/>
            <person name="Chang J.L."/>
            <person name="Chen C.-K."/>
            <person name="Cook A."/>
            <person name="Corum B."/>
            <person name="Cuomo C.A."/>
            <person name="de Jong P.J."/>
            <person name="DeCaprio D."/>
            <person name="Dewar K."/>
            <person name="FitzGerald M."/>
            <person name="Gilbert J."/>
            <person name="Gibson R."/>
            <person name="Gnerre S."/>
            <person name="Goldstein S."/>
            <person name="Grafham D.V."/>
            <person name="Grocock R."/>
            <person name="Hafez N."/>
            <person name="Hagopian D.S."/>
            <person name="Hart E."/>
            <person name="Norman C.H."/>
            <person name="Humphray S."/>
            <person name="Jaffe D.B."/>
            <person name="Jones M."/>
            <person name="Kamal M."/>
            <person name="Khodiyar V.K."/>
            <person name="LaButti K."/>
            <person name="Laird G."/>
            <person name="Lehoczky J."/>
            <person name="Liu X."/>
            <person name="Lokyitsang T."/>
            <person name="Loveland J."/>
            <person name="Lui A."/>
            <person name="Macdonald P."/>
            <person name="Major J.E."/>
            <person name="Matthews L."/>
            <person name="Mauceli E."/>
            <person name="McCarroll S.A."/>
            <person name="Mihalev A.H."/>
            <person name="Mudge J."/>
            <person name="Nguyen C."/>
            <person name="Nicol R."/>
            <person name="O'Leary S.B."/>
            <person name="Osoegawa K."/>
            <person name="Schwartz D.C."/>
            <person name="Shaw-Smith C."/>
            <person name="Stankiewicz P."/>
            <person name="Steward C."/>
            <person name="Swarbreck D."/>
            <person name="Venkataraman V."/>
            <person name="Whittaker C.A."/>
            <person name="Yang X."/>
            <person name="Zimmer A.R."/>
            <person name="Bradley A."/>
            <person name="Hubbard T."/>
            <person name="Birren B.W."/>
            <person name="Rogers J."/>
            <person name="Lander E.S."/>
            <person name="Nusbaum C."/>
        </authorList>
    </citation>
    <scope>NUCLEOTIDE SEQUENCE [LARGE SCALE GENOMIC DNA]</scope>
</reference>
<reference key="4">
    <citation type="journal article" date="2004" name="Genome Res.">
        <title>The status, quality, and expansion of the NIH full-length cDNA project: the Mammalian Gene Collection (MGC).</title>
        <authorList>
            <consortium name="The MGC Project Team"/>
        </authorList>
    </citation>
    <scope>NUCLEOTIDE SEQUENCE [LARGE SCALE MRNA] (ISOFORM 3)</scope>
</reference>
<reference key="5">
    <citation type="journal article" date="1997" name="DNA Res.">
        <title>Prediction of the coding sequences of unidentified human genes. VII. The complete sequences of 100 new cDNA clones from brain which can code for large proteins in vitro.</title>
        <authorList>
            <person name="Nagase T."/>
            <person name="Ishikawa K."/>
            <person name="Nakajima D."/>
            <person name="Ohira M."/>
            <person name="Seki N."/>
            <person name="Miyajima N."/>
            <person name="Tanaka A."/>
            <person name="Kotani H."/>
            <person name="Nomura N."/>
            <person name="Ohara O."/>
        </authorList>
    </citation>
    <scope>NUCLEOTIDE SEQUENCE [LARGE SCALE MRNA] OF 1419-4486 (ISOFORM 2)</scope>
    <source>
        <tissue>Brain</tissue>
    </source>
</reference>
<reference key="6">
    <citation type="submission" date="2003-08" db="EMBL/GenBank/DDBJ databases">
        <authorList>
            <person name="Ohara O."/>
            <person name="Nagase T."/>
            <person name="Kikuno R."/>
            <person name="Yamakawa H."/>
            <person name="Nomura N."/>
        </authorList>
    </citation>
    <scope>SEQUENCE REVISION</scope>
</reference>
<reference key="7">
    <citation type="submission" date="1999-01" db="EMBL/GenBank/DDBJ databases">
        <title>Chromosomal localization of human dynein heavy chain genes.</title>
        <authorList>
            <person name="Maiti A.K."/>
            <person name="Mattei M.-G."/>
            <person name="Jorissen M."/>
            <person name="Volz A."/>
            <person name="Ziegler A."/>
            <person name="Bouvagnet P."/>
        </authorList>
    </citation>
    <scope>NUCLEOTIDE SEQUENCE [MRNA] OF 1874-1974 (ISOFORM 1)</scope>
    <source>
        <tissue>Nasal polyp</tissue>
    </source>
</reference>
<reference key="8">
    <citation type="journal article" date="2000" name="Am. J. Respir. Cell Mol. Biol.">
        <title>Characterization of an axonemal dynein heavy chain expressed early in airway epithelial ciliogenesis.</title>
        <authorList>
            <person name="Reed W."/>
            <person name="Carson J.L."/>
            <person name="Moats-Staats B.M."/>
            <person name="Lucier T."/>
            <person name="Hu P.C."/>
            <person name="Brighton L."/>
            <person name="Gambling T.M."/>
            <person name="Huang C.H."/>
            <person name="Leigh M.W."/>
            <person name="Collier A.M."/>
        </authorList>
    </citation>
    <scope>CHARACTERIZATION</scope>
</reference>
<reference key="9">
    <citation type="journal article" date="2018" name="Am. J. Hum. Genet.">
        <title>Mutations in outer dynein arm heavy chain DNAH9 cause motile cilia defects and situs inversus.</title>
        <authorList>
            <person name="Fassad M.R."/>
            <person name="Shoemark A."/>
            <person name="Legendre M."/>
            <person name="Hirst R.A."/>
            <person name="Koll F."/>
            <person name="le Borgne P."/>
            <person name="Louis B."/>
            <person name="Daudvohra F."/>
            <person name="Patel M.P."/>
            <person name="Thomas L."/>
            <person name="Dixon M."/>
            <person name="Burgoyne T."/>
            <person name="Hayes J."/>
            <person name="Nicholson A.G."/>
            <person name="Cullup T."/>
            <person name="Jenkins L."/>
            <person name="Carr S.B."/>
            <person name="Aurora P."/>
            <person name="Lemullois M."/>
            <person name="Aubusson-Fleury A."/>
            <person name="Papon J.F."/>
            <person name="O'Callaghan C."/>
            <person name="Amselem S."/>
            <person name="Hogg C."/>
            <person name="Escudier E."/>
            <person name="Tassin A.M."/>
            <person name="Mitchison H.M."/>
        </authorList>
    </citation>
    <scope>FUNCTION</scope>
    <scope>TISSUE SPECIFICITY</scope>
    <scope>SUBCELLULAR LOCATION</scope>
    <scope>INVOLVEMENT IN CILD40</scope>
    <scope>VARIANTS CILD40 GLU-1881; HIS-2965; LEU-3398 AND ASN-4123</scope>
    <scope>CHARACTERIZATION OF VARIANTS CILD40 GLU-1881; HIS-2965 AND ASN-4123</scope>
</reference>
<reference key="10">
    <citation type="journal article" date="2018" name="Am. J. Hum. Genet.">
        <title>Recessive DNAH9 loss-of-function mutations cause laterality defects and subtle respiratory ciliary-beating defects.</title>
        <authorList>
            <person name="Loges N.T."/>
            <person name="Antony D."/>
            <person name="Maver A."/>
            <person name="Deardorff M.A."/>
            <person name="Guelec E.Y."/>
            <person name="Gezdirici A."/>
            <person name="Noethe-Menchen T."/>
            <person name="Hoeben I.M."/>
            <person name="Jelten L."/>
            <person name="Frank D."/>
            <person name="Werner C."/>
            <person name="Tebbe J."/>
            <person name="Wu K."/>
            <person name="Goldmuntz E."/>
            <person name="Cuturilo G."/>
            <person name="Krock B."/>
            <person name="Ritter A."/>
            <person name="Hjeij R."/>
            <person name="Bakey Z."/>
            <person name="Pennekamp P."/>
            <person name="Dworniczak B."/>
            <person name="Brunner H."/>
            <person name="Peterlin B."/>
            <person name="Tanidir C."/>
            <person name="Olbrich H."/>
            <person name="Omran H."/>
            <person name="Schmidts M."/>
        </authorList>
    </citation>
    <scope>FUNCTION</scope>
    <scope>SUBCELLULAR LOCATION</scope>
    <scope>INTERACTION WITH ODAD1</scope>
    <scope>INVOLVEMENT IN CILD40</scope>
    <scope>VARIANTS CILD40 666-TRP--ILE-4486 DEL; ARG-1674; 2751-GLN--ILE-4486 DEL AND 3889-SER--ILE-4486 DEL</scope>
    <scope>CHARACTERIZATION OF VARIANT CILD40 2751-GLN--ILE-4486 DEL</scope>
</reference>
<reference key="11">
    <citation type="journal article" date="2006" name="Science">
        <title>The consensus coding sequences of human breast and colorectal cancers.</title>
        <authorList>
            <person name="Sjoeblom T."/>
            <person name="Jones S."/>
            <person name="Wood L.D."/>
            <person name="Parsons D.W."/>
            <person name="Lin J."/>
            <person name="Barber T.D."/>
            <person name="Mandelker D."/>
            <person name="Leary R.J."/>
            <person name="Ptak J."/>
            <person name="Silliman N."/>
            <person name="Szabo S."/>
            <person name="Buckhaults P."/>
            <person name="Farrell C."/>
            <person name="Meeh P."/>
            <person name="Markowitz S.D."/>
            <person name="Willis J."/>
            <person name="Dawson D."/>
            <person name="Willson J.K.V."/>
            <person name="Gazdar A.F."/>
            <person name="Hartigan J."/>
            <person name="Wu L."/>
            <person name="Liu C."/>
            <person name="Parmigiani G."/>
            <person name="Park B.H."/>
            <person name="Bachman K.E."/>
            <person name="Papadopoulos N."/>
            <person name="Vogelstein B."/>
            <person name="Kinzler K.W."/>
            <person name="Velculescu V.E."/>
        </authorList>
    </citation>
    <scope>VARIANTS [LARGE SCALE ANALYSIS] LEU-771; HIS-2653 AND ASN-3664</scope>
</reference>
<reference key="12">
    <citation type="journal article" date="2019" name="Am. J. Hum. Genet.">
        <title>Mutations in DNAH17, Encoding a Sperm-Specific Axonemal Outer Dynein Arm Heavy Chain, Cause Isolated Male Infertility Due to Asthenozoospermia.</title>
        <authorList>
            <person name="Whitfield M."/>
            <person name="Thomas L."/>
            <person name="Bequignon E."/>
            <person name="Schmitt A."/>
            <person name="Stouvenel L."/>
            <person name="Montantin G."/>
            <person name="Tissier S."/>
            <person name="Duquesnoy P."/>
            <person name="Copin B."/>
            <person name="Chantot S."/>
            <person name="Dastot F."/>
            <person name="Faucon C."/>
            <person name="Barbotin A.L."/>
            <person name="Loyens A."/>
            <person name="Siffroi J.P."/>
            <person name="Papon J.F."/>
            <person name="Escudier E."/>
            <person name="Amselem S."/>
            <person name="Mitchell V."/>
            <person name="Toure A."/>
            <person name="Legendre M."/>
        </authorList>
    </citation>
    <scope>TISSUE SPECIFICITY</scope>
    <scope>SUBCELLULAR LOCATION</scope>
</reference>
<sequence>MRLAEERAALAAENADGEPGADRRLRLLGTYVAMSLRPAAGAWERCAGSAEAEQLLQAFLGRDAAEGPRPLLVVRPGPRGLAIRPGLEVGPESGLAGAKALFFLRTGPEPPGPDSFRGAVVCGDLPAAPLEHLAALFSEVVLPVLANEKNRLNWPHMICEDVRRHAHSLQCDLSVILEQVKGKTLLPLPAGSEKMEFADSKSETVLDSIDKSVIYAIESAVIKWSYQVQVVLKRESSQPLLQGENPTPKVELEFWKSRYEDLKYIYNQLRTITVRGMAKLLDKLQSSYFPAFKAMYRDVVAALAEAQDIHVHLIPLQRHLEALENAEFPEVKPQLRPLLHVVCLIWATCKSYRSPGRLTVLLQEICNLLIQQASNYLSPEDLLRSEVEESQRKLQVVSDTLSFFKQEFQDRRENLHTYFKENQEVKEWDFQSSLVFVRLDGFLGQLHVVEGLLKTALDFHKLGKVEFSGVRGNALSQQVQQMHEEFQEMYRLLSGSSSDCLYLQSTDFENDVSEFNQKVEDLDRRLGTIFIQAFDDAPGLEHAFKLLDIAGNLLERPLVARDTSDKYLVLIQMFNKDLDAVRMIYSQHVQEEAELGFSPVHKNMPTVAGGLRWAQELRQRIQGPFSNFGRITHPCMESAEGKRMQQKYEDMLSLLEKYETRLYEDWCRTVSEKSQYNLSQPLLKRDPETKEITINFNPQLISVLKEMSYLEPREMKHMPETAAAMFSSRDFYRQLVANLELMANWYNKVMKTLLEVEFPLVEEELQNIDLRLRAAEETLNWKTEGICDYVTEITSSIHDLEQRIQKTKDNVEEIQNIMKTWVTPIFKTKDGKRESLLSLDDRHDRMEKYYNLIKESGLKIHALVQENLGLFSADPTSNIWKTYVNSIDNLLLNGFFLAIECSLKYLLENTECKAGLTPIFEAQLSLAIPELVFYPSLESGVKGGFCDIVEGLITSIFRIPSLVPRLSPQNGSPHYQVDLDGIPDLANMRRTLMERVQRMMGLCCGYQSTFSQYSYLYVEDRKEVLGQFLLYGHILTPEEIEDHVEDGIPENPPLLSQFKVQIDSYETLYEEVCRLEPIKVFDGWMKIDIRPFKASLLNIIKRWSLLFKQHLVDHVTHSLANLDAFIKKSESGLLKKVEKGDFQGLVEIMGHLMAVKERQSNTDEMFEPLKQTIELLKTYEQELPETVFKQLEELPEKWNNIKKVAITVKQQVAPLQANEVTLLRQRCTAFDAEQQQFWEQFHKEAPFRFDSIHPHQMLDARHIEIQQMESTMASISESASLFEVNVPDYKQLRQCRKEVCQLKELWDTIGMVTSSIHAWETTPWRNINVEAMELECKQFARHIRNLDKEVRAWDAFTGLESTVWNTLSSLRAVAELQNPAIRERHWRQLMQATGVSFTMDQDTTLAHLLQLQLHHYEDEVRGIVDKAAKEMGMEKTLKELQTTWAGMEFQYEPHPRTNVPLLCSDEDLIEVLEDNQVQLQNLVMSKYVAFFLEEVSGWQKKLSTVDAVISIWFEVQRTWTHLESIFTGSEDIRAQLPQDSKRFEGIDIDFKELAYDAQKIPNVVQTTNKPGLYEKLEDIQGRLCLCEKALAEYLDTKRLAFPRFYFLSSSDLLDILSNGTAPQQVQRHLSKLFDNMAKMRFQLDASGEPTKTSLGMYSKEEEYVAFSEPCDCSGQVEIWLNHVLGHMKATVRHEMTEGVTAYEEKPREQWLFDHPAQVALTCTQIWWTTEVGMAFARLEEGYESAMKDYYKKQVAQLKTLITMLIGQLSKGDRQKIMTICTIDVHARDVVAKMIAQKVDNAQAFLWLSQLRHRWDDEVKHCFANICDAQFLYSYEYLGNTPRLVITPLTDRCYITLTQSLHLTMSGAPAGPAGTGKTETTKDLGRALGILVYVFNCSEQMDYKSCGNIYKGLAQTGAWGCFDEFNRISVEVLSVVAVQVKSIQDAIRDKKQWFSFLGEEISLNPSVGIFITMNPGYAGRTELPENLKSLFRPCAMVVPDFELICEIMLVAEGFIEAQSLARKFITLYQLCKELLSKQDHYDWGLRAIKSVLVVAGSLKRGDPDRPEDQVLMRSLRDFNIPKIVTDDMPIFMGLIGDLFPALDVPRRRDPNFEALVRKAIVDLKLQAEDNFVLKVVQLEELLAVRHSVFVVGGAGTGKSQVLRSLHKTYQIMKRRPVWTDLNPKAVTNDELFGIINPATGEWKDGLFSSIMRELANITHDGPKWILLDGDIDPMWIESLNTVMDDNKVLTLASNERIPLNPTMKLLFEISHLRTATPATVSRAGILYINPADLGWNPPVSSWIEKREIQTERANLTILFDKYLPTCLDTLRTRFKKIIPIPEQSMVQMVCHLLECLLTTEDIPADCPKEIYEHYFVFAAIWAFGGAMVQDQLVDYRAEFSKWWLTEFKTVKFPSQGTIFDYYIDPETKKFEPWSKLVPQFEFDPEMPLQACLVHTSETIRVCYFMERLMARQRPVMLVGTAGTGKSVLVGAKLASLDPEAYLVKNVPFNYYTTSAMLQAVLEKPLEKKAGRNYGPPGNKKLIYFIDDMNMPEVDAYGTVQPHTIIRQHLDYGHWYDRSKLSLKEITNVQYVSCMNPTAGSFTINPRLQRHFSVFVLSFPGADALSSIYSIILTQHLKLGNFPASLQKSIPPLIDLALAFHQKIATTFLPTGIKFHYIFNLRDFANIFQGILFSSVECVKSTWDLIRLYLHESNRVYRDKMVEEKDFDLFDKIQTEVLKKTFDDIEDPVEQTQSPNLYCHFANGIGEPKYMPVQSWELLTQTLVEALENHNEVNTVMDLVLFEDAMRHVCHINRILESPRGNALLVGVGGSGKQSLTRLAAFISSMDVFQITLRKGYQIQDFKMDLASLCLKAGVKNLNTVFLMTDAQVADERFLVLINDLLASGEIPDLYSDDEVENIISNVRNEVKSQGLVDNRENCWKFFIDRIRRQLKVTLCFSPVGNKLRVRSRKFPAIVNCTAIHWFHEWPQQALESVSLRFLQNTEGIEPTVKQSISKFMAFVHTSVNQTSQSYLSNEQRYNYTTPKSFLEFIRLYQSLLHRHRKELKCKTERLENGLLKLHSTSAQVDDLKAKLAAQEVELKQKNEDADKLIQVVGVETDKVSREKAMADEEEQKVAVIMLEVKQKQKDCEEDLAKAEPALTAAQAALNTLNKTNLTELKSFGSPPLAVSNVSAAVMVLMAPRGRVPKDRSWKAAKVTMAKVDGFLDSLINFNKENIHENCLKAIRPYLQDPEFNPEFVATKSYAAAGLCSWVINIVRFYEVFCDVEPKRQALNKATADLTAAQEKLAAIKAKIAHLNENLAKLTARFEKATADKLKCQQEAEVTAVTISLANRLVGGLASENVRWADAVQNFKQQERTLCGDILLITAFISYLGFFTKKYRQSLLDRTWRPYLSQLKTPIPVTPALDPLRMLMDDADVAAWQNEGLPADRMSVENATILINCERWPLMVDPQLQGIKWIKNKYGEDLRVTQIGQKGYLQIIEQALEAGAVVLIENLEESIDPVLGPLLGREVIKKGRFIKIGDKECEYNPKFRLILHTKLANPHYQPELQAQATLINFTVTRDGLEDQLLAAVVSMERPDLEQLKSDLTKQQNGFKITLKTLEDSLLSRLSSASGNFLGETVLVENLEITKQTAAEVEKKVQEAKVTEVKINEAREHYRPAAARASLLYFIMNDLSKIHPMYQFSLKAFSIVFQKAVERAAPDESLRERVANLIDSITFSVYQYTIRGLFECDKLTYLAQLTFQILLMNREVNAVELDFLLRSPVQTGTASPVEFLSHQAWGAVKVLSSMEEFSNLDRDIEGSAKSWKKFVESECPEKEKLPQEWKNKTALQRLCMLRAMRPDRMTYALRDFVEEKLGSKYVVGRALDFATSFEESGPATPMFFILSPGVDPLKDVESQGRKLGYTFNNQNFHNVSLGQGQEVVAEAALDLAAKKGHWVILQNIHLVAKWLSTLEKKLEEHSENSHPEFRVFMSAEPAPSPEGHIIPQGILENSIKITNEPPTGMHANLHKALDNFTQDTLEMCSRETEFKSILFALCYFHAVVAERRKFGPQGWNRSYPFNTGDLTISVNVLYNFLEANAKVPYDDLRYLFGEIMYGGHITDDWDRRLCRTYLGEFIRPEMLEGELSLAPGFPLPGNMDYNGYHQYIDAELPPESPYLYGLHPNAEIGFLTQTSEKLFRTVLELQPRDSQARDGAGATREEKVKALLEEILERVTDEFNIPELMAKVEERTPYIVVAFQECGRMNILTREIQRSLRELELGLKGELTMTSHMENLQNALYFDMVPESWARRAYPSTAGLAAWFPDLLNRIKELEAWTGDFTMPSTVWLTGFFNPQSFLTAIMQSTARKNEWPLDQMALQCDMTKKNREEFRSPPREGAYIHGLFMEGACWDTQAGIITEAKLKDLTPPMPVMFIKAIPADKQDCRSVYSCPVYKTSQRGPTYVWTFNLKTKENPSKWVLAGVALLLQI</sequence>
<gene>
    <name evidence="12" type="primary">DNAH9</name>
    <name type="synonym">DNAH17L</name>
    <name type="synonym">DNEL1</name>
    <name type="synonym">KIAA0357</name>
</gene>
<proteinExistence type="evidence at protein level"/>
<dbReference type="EMBL" id="AF257737">
    <property type="protein sequence ID" value="AAF69004.1"/>
    <property type="molecule type" value="mRNA"/>
</dbReference>
<dbReference type="EMBL" id="AJ404468">
    <property type="protein sequence ID" value="CAB94756.1"/>
    <property type="molecule type" value="mRNA"/>
</dbReference>
<dbReference type="EMBL" id="AC005209">
    <property type="status" value="NOT_ANNOTATED_CDS"/>
    <property type="molecule type" value="Genomic_DNA"/>
</dbReference>
<dbReference type="EMBL" id="AC005410">
    <property type="status" value="NOT_ANNOTATED_CDS"/>
    <property type="molecule type" value="Genomic_DNA"/>
</dbReference>
<dbReference type="EMBL" id="AC005701">
    <property type="status" value="NOT_ANNOTATED_CDS"/>
    <property type="molecule type" value="Genomic_DNA"/>
</dbReference>
<dbReference type="EMBL" id="BC128421">
    <property type="protein sequence ID" value="AAI28422.1"/>
    <property type="molecule type" value="mRNA"/>
</dbReference>
<dbReference type="EMBL" id="AB002355">
    <property type="protein sequence ID" value="BAA21573.2"/>
    <property type="molecule type" value="mRNA"/>
</dbReference>
<dbReference type="EMBL" id="AJ132088">
    <property type="protein sequence ID" value="CAA10561.1"/>
    <property type="molecule type" value="mRNA"/>
</dbReference>
<dbReference type="CCDS" id="CCDS11160.1">
    <molecule id="Q9NYC9-1"/>
</dbReference>
<dbReference type="CCDS" id="CCDS11161.1">
    <molecule id="Q9NYC9-3"/>
</dbReference>
<dbReference type="RefSeq" id="NP_001363.2">
    <molecule id="Q9NYC9-1"/>
    <property type="nucleotide sequence ID" value="NM_001372.4"/>
</dbReference>
<dbReference type="RefSeq" id="NP_004653.2">
    <molecule id="Q9NYC9-3"/>
    <property type="nucleotide sequence ID" value="NM_004662.2"/>
</dbReference>
<dbReference type="PDB" id="8J07">
    <property type="method" value="EM"/>
    <property type="resolution" value="4.10 A"/>
    <property type="chains" value="n9/p9/r9/t9=1-4486"/>
</dbReference>
<dbReference type="PDBsum" id="8J07"/>
<dbReference type="EMDB" id="EMD-35888"/>
<dbReference type="SMR" id="Q9NYC9"/>
<dbReference type="BioGRID" id="108109">
    <property type="interactions" value="17"/>
</dbReference>
<dbReference type="CORUM" id="Q9NYC9"/>
<dbReference type="FunCoup" id="Q9NYC9">
    <property type="interactions" value="133"/>
</dbReference>
<dbReference type="IntAct" id="Q9NYC9">
    <property type="interactions" value="1"/>
</dbReference>
<dbReference type="STRING" id="9606.ENSP00000262442"/>
<dbReference type="GlyGen" id="Q9NYC9">
    <property type="glycosylation" value="2 sites, 1 O-linked glycan (1 site)"/>
</dbReference>
<dbReference type="iPTMnet" id="Q9NYC9"/>
<dbReference type="PhosphoSitePlus" id="Q9NYC9"/>
<dbReference type="BioMuta" id="DNAH9"/>
<dbReference type="DMDM" id="311033454"/>
<dbReference type="jPOST" id="Q9NYC9"/>
<dbReference type="MassIVE" id="Q9NYC9"/>
<dbReference type="PaxDb" id="9606-ENSP00000262442"/>
<dbReference type="PeptideAtlas" id="Q9NYC9"/>
<dbReference type="ProteomicsDB" id="83213">
    <molecule id="Q9NYC9-1"/>
</dbReference>
<dbReference type="ProteomicsDB" id="83214">
    <molecule id="Q9NYC9-2"/>
</dbReference>
<dbReference type="ProteomicsDB" id="83215">
    <molecule id="Q9NYC9-3"/>
</dbReference>
<dbReference type="Antibodypedia" id="12949">
    <property type="antibodies" value="36 antibodies from 13 providers"/>
</dbReference>
<dbReference type="Ensembl" id="ENST00000262442.9">
    <molecule id="Q9NYC9-1"/>
    <property type="protein sequence ID" value="ENSP00000262442.3"/>
    <property type="gene ID" value="ENSG00000007174.18"/>
</dbReference>
<dbReference type="Ensembl" id="ENST00000608377.5">
    <molecule id="Q9NYC9-3"/>
    <property type="protein sequence ID" value="ENSP00000476951.1"/>
    <property type="gene ID" value="ENSG00000007174.18"/>
</dbReference>
<dbReference type="GeneID" id="1770"/>
<dbReference type="KEGG" id="hsa:1770"/>
<dbReference type="MANE-Select" id="ENST00000262442.9">
    <property type="protein sequence ID" value="ENSP00000262442.3"/>
    <property type="RefSeq nucleotide sequence ID" value="NM_001372.4"/>
    <property type="RefSeq protein sequence ID" value="NP_001363.2"/>
</dbReference>
<dbReference type="UCSC" id="uc002gne.3">
    <molecule id="Q9NYC9-1"/>
    <property type="organism name" value="human"/>
</dbReference>
<dbReference type="AGR" id="HGNC:2953"/>
<dbReference type="CTD" id="1770"/>
<dbReference type="DisGeNET" id="1770"/>
<dbReference type="GeneCards" id="DNAH9"/>
<dbReference type="HGNC" id="HGNC:2953">
    <property type="gene designation" value="DNAH9"/>
</dbReference>
<dbReference type="HPA" id="ENSG00000007174">
    <property type="expression patterns" value="Tissue enhanced (brain, choroid plexus, fallopian tube)"/>
</dbReference>
<dbReference type="MalaCards" id="DNAH9"/>
<dbReference type="MIM" id="603330">
    <property type="type" value="gene"/>
</dbReference>
<dbReference type="MIM" id="618300">
    <property type="type" value="phenotype"/>
</dbReference>
<dbReference type="neXtProt" id="NX_Q9NYC9"/>
<dbReference type="OpenTargets" id="ENSG00000007174"/>
<dbReference type="Orphanet" id="244">
    <property type="disease" value="Primary ciliary dyskinesia"/>
</dbReference>
<dbReference type="Orphanet" id="157769">
    <property type="disease" value="Situs ambiguus"/>
</dbReference>
<dbReference type="Orphanet" id="101063">
    <property type="disease" value="Situs inversus totalis"/>
</dbReference>
<dbReference type="PharmGKB" id="PA27406"/>
<dbReference type="VEuPathDB" id="HostDB:ENSG00000007174"/>
<dbReference type="eggNOG" id="KOG3595">
    <property type="taxonomic scope" value="Eukaryota"/>
</dbReference>
<dbReference type="GeneTree" id="ENSGT00940000159717"/>
<dbReference type="HOGENOM" id="CLU_000038_9_1_1"/>
<dbReference type="InParanoid" id="Q9NYC9"/>
<dbReference type="OMA" id="WAYLVND"/>
<dbReference type="OrthoDB" id="286107at2759"/>
<dbReference type="PAN-GO" id="Q9NYC9">
    <property type="GO annotations" value="7 GO annotations based on evolutionary models"/>
</dbReference>
<dbReference type="PhylomeDB" id="Q9NYC9"/>
<dbReference type="TreeFam" id="TF316836"/>
<dbReference type="PathwayCommons" id="Q9NYC9"/>
<dbReference type="SignaLink" id="Q9NYC9"/>
<dbReference type="BioGRID-ORCS" id="1770">
    <property type="hits" value="5 hits in 1144 CRISPR screens"/>
</dbReference>
<dbReference type="ChiTaRS" id="DNAH9">
    <property type="organism name" value="human"/>
</dbReference>
<dbReference type="GeneWiki" id="DNAH9"/>
<dbReference type="GenomeRNAi" id="1770"/>
<dbReference type="Pharos" id="Q9NYC9">
    <property type="development level" value="Tdark"/>
</dbReference>
<dbReference type="PRO" id="PR:Q9NYC9"/>
<dbReference type="Proteomes" id="UP000005640">
    <property type="component" value="Chromosome 17"/>
</dbReference>
<dbReference type="RNAct" id="Q9NYC9">
    <property type="molecule type" value="protein"/>
</dbReference>
<dbReference type="Bgee" id="ENSG00000007174">
    <property type="expression patterns" value="Expressed in right uterine tube and 128 other cell types or tissues"/>
</dbReference>
<dbReference type="ExpressionAtlas" id="Q9NYC9">
    <property type="expression patterns" value="baseline and differential"/>
</dbReference>
<dbReference type="GO" id="GO:0097729">
    <property type="term" value="C:9+2 motile cilium"/>
    <property type="evidence" value="ECO:0000314"/>
    <property type="project" value="GO_Central"/>
</dbReference>
<dbReference type="GO" id="GO:0005930">
    <property type="term" value="C:axoneme"/>
    <property type="evidence" value="ECO:0000314"/>
    <property type="project" value="UniProtKB"/>
</dbReference>
<dbReference type="GO" id="GO:0120135">
    <property type="term" value="C:distal portion of axoneme"/>
    <property type="evidence" value="ECO:0000314"/>
    <property type="project" value="UniProtKB"/>
</dbReference>
<dbReference type="GO" id="GO:0030286">
    <property type="term" value="C:dynein complex"/>
    <property type="evidence" value="ECO:0000318"/>
    <property type="project" value="GO_Central"/>
</dbReference>
<dbReference type="GO" id="GO:0005576">
    <property type="term" value="C:extracellular region"/>
    <property type="evidence" value="ECO:0007669"/>
    <property type="project" value="GOC"/>
</dbReference>
<dbReference type="GO" id="GO:0097386">
    <property type="term" value="C:glial cell projection"/>
    <property type="evidence" value="ECO:0007669"/>
    <property type="project" value="Ensembl"/>
</dbReference>
<dbReference type="GO" id="GO:0005874">
    <property type="term" value="C:microtubule"/>
    <property type="evidence" value="ECO:0007669"/>
    <property type="project" value="UniProtKB-KW"/>
</dbReference>
<dbReference type="GO" id="GO:0031514">
    <property type="term" value="C:motile cilium"/>
    <property type="evidence" value="ECO:0000314"/>
    <property type="project" value="UniProtKB"/>
</dbReference>
<dbReference type="GO" id="GO:0036157">
    <property type="term" value="C:outer dynein arm"/>
    <property type="evidence" value="ECO:0007669"/>
    <property type="project" value="Ensembl"/>
</dbReference>
<dbReference type="GO" id="GO:0005524">
    <property type="term" value="F:ATP binding"/>
    <property type="evidence" value="ECO:0007669"/>
    <property type="project" value="UniProtKB-KW"/>
</dbReference>
<dbReference type="GO" id="GO:0016887">
    <property type="term" value="F:ATP hydrolysis activity"/>
    <property type="evidence" value="ECO:0007669"/>
    <property type="project" value="InterPro"/>
</dbReference>
<dbReference type="GO" id="GO:0045505">
    <property type="term" value="F:dynein intermediate chain binding"/>
    <property type="evidence" value="ECO:0000318"/>
    <property type="project" value="GO_Central"/>
</dbReference>
<dbReference type="GO" id="GO:0051959">
    <property type="term" value="F:dynein light intermediate chain binding"/>
    <property type="evidence" value="ECO:0000318"/>
    <property type="project" value="GO_Central"/>
</dbReference>
<dbReference type="GO" id="GO:0008569">
    <property type="term" value="F:minus-end-directed microtubule motor activity"/>
    <property type="evidence" value="ECO:0000318"/>
    <property type="project" value="GO_Central"/>
</dbReference>
<dbReference type="GO" id="GO:0030030">
    <property type="term" value="P:cell projection organization"/>
    <property type="evidence" value="ECO:0007669"/>
    <property type="project" value="UniProtKB-KW"/>
</dbReference>
<dbReference type="GO" id="GO:0090660">
    <property type="term" value="P:cerebrospinal fluid circulation"/>
    <property type="evidence" value="ECO:0007669"/>
    <property type="project" value="Ensembl"/>
</dbReference>
<dbReference type="GO" id="GO:0003341">
    <property type="term" value="P:cilium movement"/>
    <property type="evidence" value="ECO:0000315"/>
    <property type="project" value="UniProtKB"/>
</dbReference>
<dbReference type="GO" id="GO:0060294">
    <property type="term" value="P:cilium movement involved in cell motility"/>
    <property type="evidence" value="ECO:0000318"/>
    <property type="project" value="GO_Central"/>
</dbReference>
<dbReference type="GO" id="GO:0051649">
    <property type="term" value="P:establishment of localization in cell"/>
    <property type="evidence" value="ECO:0007669"/>
    <property type="project" value="Ensembl"/>
</dbReference>
<dbReference type="GO" id="GO:0120197">
    <property type="term" value="P:mucociliary clearance"/>
    <property type="evidence" value="ECO:0007669"/>
    <property type="project" value="Ensembl"/>
</dbReference>
<dbReference type="FunFam" id="1.10.287.2620:FF:000004">
    <property type="entry name" value="Dynein axonemal heavy chain 17"/>
    <property type="match status" value="1"/>
</dbReference>
<dbReference type="FunFam" id="1.20.1270.280:FF:000003">
    <property type="entry name" value="Dynein axonemal heavy chain 17"/>
    <property type="match status" value="1"/>
</dbReference>
<dbReference type="FunFam" id="1.20.920.20:FF:000003">
    <property type="entry name" value="Dynein axonemal heavy chain 17"/>
    <property type="match status" value="1"/>
</dbReference>
<dbReference type="FunFam" id="1.20.920.30:FF:000003">
    <property type="entry name" value="Dynein axonemal heavy chain 17"/>
    <property type="match status" value="1"/>
</dbReference>
<dbReference type="FunFam" id="3.10.490.20:FF:000002">
    <property type="entry name" value="Dynein axonemal heavy chain 17"/>
    <property type="match status" value="1"/>
</dbReference>
<dbReference type="FunFam" id="3.40.50.300:FF:000219">
    <property type="entry name" value="Dynein axonemal heavy chain 17"/>
    <property type="match status" value="1"/>
</dbReference>
<dbReference type="FunFam" id="3.40.50.300:FF:000682">
    <property type="entry name" value="Dynein axonemal heavy chain 17"/>
    <property type="match status" value="1"/>
</dbReference>
<dbReference type="FunFam" id="1.10.8.1220:FF:000001">
    <property type="entry name" value="Dynein axonemal heavy chain 5"/>
    <property type="match status" value="1"/>
</dbReference>
<dbReference type="FunFam" id="3.20.180.20:FF:000001">
    <property type="entry name" value="Dynein axonemal heavy chain 5"/>
    <property type="match status" value="1"/>
</dbReference>
<dbReference type="FunFam" id="1.20.140.100:FF:000007">
    <property type="entry name" value="Dynein axonemal heavy chain 9"/>
    <property type="match status" value="1"/>
</dbReference>
<dbReference type="FunFam" id="3.40.50.300:FF:002141">
    <property type="entry name" value="Dynein heavy chain"/>
    <property type="match status" value="1"/>
</dbReference>
<dbReference type="FunFam" id="1.10.8.710:FF:000002">
    <property type="entry name" value="dynein heavy chain 17, axonemal"/>
    <property type="match status" value="1"/>
</dbReference>
<dbReference type="FunFam" id="3.40.50.300:FF:000411">
    <property type="entry name" value="dynein heavy chain 17, axonemal"/>
    <property type="match status" value="1"/>
</dbReference>
<dbReference type="FunFam" id="1.10.8.720:FF:000002">
    <property type="entry name" value="Dynein heavy chain 9, axonemal"/>
    <property type="match status" value="1"/>
</dbReference>
<dbReference type="FunFam" id="1.20.58.1120:FF:000002">
    <property type="entry name" value="Dynein heavy chain 9, axonemal"/>
    <property type="match status" value="1"/>
</dbReference>
<dbReference type="FunFam" id="3.40.50.300:FF:000049">
    <property type="entry name" value="Dynein, axonemal, heavy chain 5"/>
    <property type="match status" value="1"/>
</dbReference>
<dbReference type="FunFam" id="1.10.472.130:FF:000001">
    <property type="entry name" value="Dynein, axonemal, heavy chain 9"/>
    <property type="match status" value="1"/>
</dbReference>
<dbReference type="Gene3D" id="1.10.287.2620">
    <property type="match status" value="1"/>
</dbReference>
<dbReference type="Gene3D" id="1.10.472.130">
    <property type="match status" value="1"/>
</dbReference>
<dbReference type="Gene3D" id="1.10.8.1220">
    <property type="match status" value="1"/>
</dbReference>
<dbReference type="Gene3D" id="1.10.8.710">
    <property type="match status" value="1"/>
</dbReference>
<dbReference type="Gene3D" id="1.20.1270.280">
    <property type="match status" value="1"/>
</dbReference>
<dbReference type="Gene3D" id="1.20.58.1120">
    <property type="match status" value="1"/>
</dbReference>
<dbReference type="Gene3D" id="1.20.920.20">
    <property type="match status" value="1"/>
</dbReference>
<dbReference type="Gene3D" id="1.20.920.30">
    <property type="match status" value="1"/>
</dbReference>
<dbReference type="Gene3D" id="3.10.490.20">
    <property type="match status" value="1"/>
</dbReference>
<dbReference type="Gene3D" id="6.10.140.1060">
    <property type="match status" value="1"/>
</dbReference>
<dbReference type="Gene3D" id="1.20.140.100">
    <property type="entry name" value="Dynein heavy chain, N-terminal domain 2"/>
    <property type="match status" value="1"/>
</dbReference>
<dbReference type="Gene3D" id="3.20.180.20">
    <property type="entry name" value="Dynein heavy chain, N-terminal domain 2"/>
    <property type="match status" value="1"/>
</dbReference>
<dbReference type="Gene3D" id="3.40.50.300">
    <property type="entry name" value="P-loop containing nucleotide triphosphate hydrolases"/>
    <property type="match status" value="5"/>
</dbReference>
<dbReference type="Gene3D" id="1.10.8.720">
    <property type="entry name" value="Region D6 of dynein motor"/>
    <property type="match status" value="1"/>
</dbReference>
<dbReference type="InterPro" id="IPR003593">
    <property type="entry name" value="AAA+_ATPase"/>
</dbReference>
<dbReference type="InterPro" id="IPR035699">
    <property type="entry name" value="AAA_6"/>
</dbReference>
<dbReference type="InterPro" id="IPR035706">
    <property type="entry name" value="AAA_9"/>
</dbReference>
<dbReference type="InterPro" id="IPR041658">
    <property type="entry name" value="AAA_lid_11"/>
</dbReference>
<dbReference type="InterPro" id="IPR042219">
    <property type="entry name" value="AAA_lid_11_sf"/>
</dbReference>
<dbReference type="InterPro" id="IPR026983">
    <property type="entry name" value="DHC"/>
</dbReference>
<dbReference type="InterPro" id="IPR041589">
    <property type="entry name" value="DNAH3_AAA_lid_1"/>
</dbReference>
<dbReference type="InterPro" id="IPR042222">
    <property type="entry name" value="Dynein_2_N"/>
</dbReference>
<dbReference type="InterPro" id="IPR043157">
    <property type="entry name" value="Dynein_AAA1S"/>
</dbReference>
<dbReference type="InterPro" id="IPR041466">
    <property type="entry name" value="Dynein_AAA5_ext"/>
</dbReference>
<dbReference type="InterPro" id="IPR041228">
    <property type="entry name" value="Dynein_C"/>
</dbReference>
<dbReference type="InterPro" id="IPR043160">
    <property type="entry name" value="Dynein_C_barrel"/>
</dbReference>
<dbReference type="InterPro" id="IPR024743">
    <property type="entry name" value="Dynein_HC_stalk"/>
</dbReference>
<dbReference type="InterPro" id="IPR024317">
    <property type="entry name" value="Dynein_heavy_chain_D4_dom"/>
</dbReference>
<dbReference type="InterPro" id="IPR004273">
    <property type="entry name" value="Dynein_heavy_D6_P-loop"/>
</dbReference>
<dbReference type="InterPro" id="IPR013602">
    <property type="entry name" value="Dynein_heavy_linker"/>
</dbReference>
<dbReference type="InterPro" id="IPR013594">
    <property type="entry name" value="Dynein_heavy_tail"/>
</dbReference>
<dbReference type="InterPro" id="IPR042228">
    <property type="entry name" value="Dynein_linker_3"/>
</dbReference>
<dbReference type="InterPro" id="IPR027417">
    <property type="entry name" value="P-loop_NTPase"/>
</dbReference>
<dbReference type="PANTHER" id="PTHR46532:SF11">
    <property type="entry name" value="DYNEIN AXONEMAL HEAVY CHAIN 12"/>
    <property type="match status" value="1"/>
</dbReference>
<dbReference type="PANTHER" id="PTHR46532">
    <property type="entry name" value="MALE FERTILITY FACTOR KL5"/>
    <property type="match status" value="1"/>
</dbReference>
<dbReference type="Pfam" id="PF12774">
    <property type="entry name" value="AAA_6"/>
    <property type="match status" value="1"/>
</dbReference>
<dbReference type="Pfam" id="PF12775">
    <property type="entry name" value="AAA_7"/>
    <property type="match status" value="1"/>
</dbReference>
<dbReference type="Pfam" id="PF12780">
    <property type="entry name" value="AAA_8"/>
    <property type="match status" value="1"/>
</dbReference>
<dbReference type="Pfam" id="PF12781">
    <property type="entry name" value="AAA_9"/>
    <property type="match status" value="1"/>
</dbReference>
<dbReference type="Pfam" id="PF17857">
    <property type="entry name" value="AAA_lid_1"/>
    <property type="match status" value="1"/>
</dbReference>
<dbReference type="Pfam" id="PF18198">
    <property type="entry name" value="AAA_lid_11"/>
    <property type="match status" value="1"/>
</dbReference>
<dbReference type="Pfam" id="PF08385">
    <property type="entry name" value="DHC_N1"/>
    <property type="match status" value="1"/>
</dbReference>
<dbReference type="Pfam" id="PF08393">
    <property type="entry name" value="DHC_N2"/>
    <property type="match status" value="1"/>
</dbReference>
<dbReference type="Pfam" id="PF17852">
    <property type="entry name" value="Dynein_AAA_lid"/>
    <property type="match status" value="1"/>
</dbReference>
<dbReference type="Pfam" id="PF18199">
    <property type="entry name" value="Dynein_C"/>
    <property type="match status" value="1"/>
</dbReference>
<dbReference type="Pfam" id="PF03028">
    <property type="entry name" value="Dynein_heavy"/>
    <property type="match status" value="1"/>
</dbReference>
<dbReference type="Pfam" id="PF12777">
    <property type="entry name" value="MT"/>
    <property type="match status" value="1"/>
</dbReference>
<dbReference type="SMART" id="SM00382">
    <property type="entry name" value="AAA"/>
    <property type="match status" value="4"/>
</dbReference>
<dbReference type="SUPFAM" id="SSF52540">
    <property type="entry name" value="P-loop containing nucleoside triphosphate hydrolases"/>
    <property type="match status" value="4"/>
</dbReference>
<accession>Q9NYC9</accession>
<accession>A2VCQ8</accession>
<accession>O15064</accession>
<accession>O95494</accession>
<accession>Q9NQ28</accession>
<comment type="function">
    <text evidence="5 6">Force generating protein required for cilia beating in respiratory epithelia (PubMed:30471717, PubMed:30471718). Produces force towards the minus ends of microtubules. Dynein has ATPase activity; the force-producing power stroke is thought to occur on release of ADP.</text>
</comment>
<comment type="subunit">
    <text evidence="6">Consists of at least two heavy chains and a number of intermediate and light chains. Interacts with ODAD1 (PubMed:30471718).</text>
</comment>
<comment type="subcellular location">
    <subcellularLocation>
        <location evidence="5 6 7">Cytoplasm</location>
        <location evidence="5 6 7">Cytoskeleton</location>
        <location evidence="5 6 7">Cilium axoneme</location>
    </subcellularLocation>
    <text evidence="5 6">Found in the distal portion of ciliary axoneme.</text>
</comment>
<comment type="alternative products">
    <event type="alternative splicing"/>
    <isoform>
        <id>Q9NYC9-1</id>
        <name>1</name>
        <sequence type="displayed"/>
    </isoform>
    <isoform>
        <id>Q9NYC9-2</id>
        <name>2</name>
        <sequence type="described" ref="VSP_035285"/>
    </isoform>
    <isoform>
        <id>Q9NYC9-3</id>
        <name>3</name>
        <sequence type="described" ref="VSP_043443"/>
    </isoform>
</comment>
<comment type="tissue specificity">
    <text evidence="5 7">Expressed in upper and lower respiratory airway epithelia (at protein level). Not detected in spermatozoa (at protein level) (PubMed:31178125).</text>
</comment>
<comment type="domain">
    <text>Dynein heavy chains probably consist of an N-terminal stem (which binds cargo and interacts with other dynein components), and the head or motor domain. The motor contains six tandemly-linked AAA domains in the head, which form a ring. A stalk-like structure (formed by two of the coiled coil domains) protrudes between AAA 4 and AAA 5 and terminates in a microtubule-binding site. A seventh domain may also contribute to this ring; it is not clear whether the N-terminus or the C-terminus forms this extra domain. There are four well-conserved and two non-conserved ATPase sites, one per AAA domain. Probably only one of these (within AAA 1) actually hydrolyzes ATP, the others may serve a regulatory function.</text>
</comment>
<comment type="disease" evidence="5 6">
    <disease id="DI-05451">
        <name>Ciliary dyskinesia, primary, 40</name>
        <acronym>CILD40</acronym>
        <description>A form of primary ciliary dyskinesia, a disorder characterized by abnormalities of motile cilia. Respiratory infections leading to chronic inflammation and bronchiectasis are recurrent, due to defects in the respiratory cilia. Some patients exhibit randomization of left-right body asymmetry and situs inversus. Primary ciliary dyskinesia associated with situs inversus is referred to as Kartagener syndrome. CILD40 inheritance is autosomal recessive.</description>
        <dbReference type="MIM" id="618300"/>
    </disease>
    <text>The disease is caused by variants affecting the gene represented in this entry.</text>
</comment>
<comment type="similarity">
    <text evidence="11">Belongs to the dynein heavy chain family.</text>
</comment>